<protein>
    <recommendedName>
        <fullName evidence="2">ATP synthase epsilon chain</fullName>
    </recommendedName>
    <alternativeName>
        <fullName evidence="2">ATP synthase F1 sector epsilon subunit</fullName>
    </alternativeName>
    <alternativeName>
        <fullName evidence="2">F-ATPase epsilon subunit</fullName>
    </alternativeName>
</protein>
<dbReference type="EMBL" id="AF188265">
    <property type="protein sequence ID" value="AAF19363.1"/>
    <property type="status" value="ALT_INIT"/>
    <property type="molecule type" value="mRNA"/>
</dbReference>
<dbReference type="EMBL" id="AE006468">
    <property type="protein sequence ID" value="AAL22722.1"/>
    <property type="molecule type" value="Genomic_DNA"/>
</dbReference>
<dbReference type="RefSeq" id="NP_462763.1">
    <property type="nucleotide sequence ID" value="NC_003197.2"/>
</dbReference>
<dbReference type="RefSeq" id="WP_001251971.1">
    <property type="nucleotide sequence ID" value="NC_003197.2"/>
</dbReference>
<dbReference type="SMR" id="P0A1B7"/>
<dbReference type="STRING" id="99287.STM3864"/>
<dbReference type="PaxDb" id="99287-STM3864"/>
<dbReference type="GeneID" id="1255391"/>
<dbReference type="KEGG" id="stm:STM3864"/>
<dbReference type="PATRIC" id="fig|99287.12.peg.4093"/>
<dbReference type="HOGENOM" id="CLU_084338_2_0_6"/>
<dbReference type="OMA" id="EERLYQG"/>
<dbReference type="PhylomeDB" id="P0A1B7"/>
<dbReference type="BioCyc" id="SENT99287:STM3864-MONOMER"/>
<dbReference type="Proteomes" id="UP000001014">
    <property type="component" value="Chromosome"/>
</dbReference>
<dbReference type="GO" id="GO:0005886">
    <property type="term" value="C:plasma membrane"/>
    <property type="evidence" value="ECO:0007669"/>
    <property type="project" value="UniProtKB-SubCell"/>
</dbReference>
<dbReference type="GO" id="GO:0045259">
    <property type="term" value="C:proton-transporting ATP synthase complex"/>
    <property type="evidence" value="ECO:0007669"/>
    <property type="project" value="UniProtKB-KW"/>
</dbReference>
<dbReference type="GO" id="GO:0005524">
    <property type="term" value="F:ATP binding"/>
    <property type="evidence" value="ECO:0007669"/>
    <property type="project" value="UniProtKB-UniRule"/>
</dbReference>
<dbReference type="GO" id="GO:0046933">
    <property type="term" value="F:proton-transporting ATP synthase activity, rotational mechanism"/>
    <property type="evidence" value="ECO:0007669"/>
    <property type="project" value="UniProtKB-UniRule"/>
</dbReference>
<dbReference type="GO" id="GO:0015986">
    <property type="term" value="P:proton motive force-driven ATP synthesis"/>
    <property type="evidence" value="ECO:0000318"/>
    <property type="project" value="GO_Central"/>
</dbReference>
<dbReference type="CDD" id="cd12152">
    <property type="entry name" value="F1-ATPase_delta"/>
    <property type="match status" value="1"/>
</dbReference>
<dbReference type="FunFam" id="1.20.5.440:FF:000001">
    <property type="entry name" value="ATP synthase epsilon chain"/>
    <property type="match status" value="1"/>
</dbReference>
<dbReference type="FunFam" id="2.60.15.10:FF:000001">
    <property type="entry name" value="ATP synthase epsilon chain"/>
    <property type="match status" value="1"/>
</dbReference>
<dbReference type="Gene3D" id="1.20.5.440">
    <property type="entry name" value="ATP synthase delta/epsilon subunit, C-terminal domain"/>
    <property type="match status" value="1"/>
</dbReference>
<dbReference type="Gene3D" id="2.60.15.10">
    <property type="entry name" value="F0F1 ATP synthase delta/epsilon subunit, N-terminal"/>
    <property type="match status" value="1"/>
</dbReference>
<dbReference type="HAMAP" id="MF_00530">
    <property type="entry name" value="ATP_synth_epsil_bac"/>
    <property type="match status" value="1"/>
</dbReference>
<dbReference type="InterPro" id="IPR036794">
    <property type="entry name" value="ATP_F1_dsu/esu_C_sf"/>
</dbReference>
<dbReference type="InterPro" id="IPR001469">
    <property type="entry name" value="ATP_synth_F1_dsu/esu"/>
</dbReference>
<dbReference type="InterPro" id="IPR020546">
    <property type="entry name" value="ATP_synth_F1_dsu/esu_N"/>
</dbReference>
<dbReference type="InterPro" id="IPR020547">
    <property type="entry name" value="ATP_synth_F1_esu_C"/>
</dbReference>
<dbReference type="InterPro" id="IPR036771">
    <property type="entry name" value="ATPsynth_dsu/esu_N"/>
</dbReference>
<dbReference type="NCBIfam" id="TIGR01216">
    <property type="entry name" value="ATP_synt_epsi"/>
    <property type="match status" value="1"/>
</dbReference>
<dbReference type="NCBIfam" id="NF001847">
    <property type="entry name" value="PRK00571.1-4"/>
    <property type="match status" value="1"/>
</dbReference>
<dbReference type="PANTHER" id="PTHR13822">
    <property type="entry name" value="ATP SYNTHASE DELTA/EPSILON CHAIN"/>
    <property type="match status" value="1"/>
</dbReference>
<dbReference type="PANTHER" id="PTHR13822:SF10">
    <property type="entry name" value="ATP SYNTHASE EPSILON CHAIN, CHLOROPLASTIC"/>
    <property type="match status" value="1"/>
</dbReference>
<dbReference type="Pfam" id="PF00401">
    <property type="entry name" value="ATP-synt_DE"/>
    <property type="match status" value="1"/>
</dbReference>
<dbReference type="Pfam" id="PF02823">
    <property type="entry name" value="ATP-synt_DE_N"/>
    <property type="match status" value="1"/>
</dbReference>
<dbReference type="SUPFAM" id="SSF46604">
    <property type="entry name" value="Epsilon subunit of F1F0-ATP synthase C-terminal domain"/>
    <property type="match status" value="1"/>
</dbReference>
<dbReference type="SUPFAM" id="SSF51344">
    <property type="entry name" value="Epsilon subunit of F1F0-ATP synthase N-terminal domain"/>
    <property type="match status" value="1"/>
</dbReference>
<reference key="1">
    <citation type="submission" date="1999-09" db="EMBL/GenBank/DDBJ databases">
        <title>Molecular structure of nonacistronic atp genes encoding ATP synthase in Salmonella typhimurium.</title>
        <authorList>
            <person name="Kim H.-K."/>
            <person name="Heo N.-J."/>
            <person name="Ghim S.-Y."/>
            <person name="Song B.-H."/>
        </authorList>
    </citation>
    <scope>NUCLEOTIDE SEQUENCE [GENOMIC DNA]</scope>
    <source>
        <strain>TA98</strain>
    </source>
</reference>
<reference key="2">
    <citation type="journal article" date="2001" name="Nature">
        <title>Complete genome sequence of Salmonella enterica serovar Typhimurium LT2.</title>
        <authorList>
            <person name="McClelland M."/>
            <person name="Sanderson K.E."/>
            <person name="Spieth J."/>
            <person name="Clifton S.W."/>
            <person name="Latreille P."/>
            <person name="Courtney L."/>
            <person name="Porwollik S."/>
            <person name="Ali J."/>
            <person name="Dante M."/>
            <person name="Du F."/>
            <person name="Hou S."/>
            <person name="Layman D."/>
            <person name="Leonard S."/>
            <person name="Nguyen C."/>
            <person name="Scott K."/>
            <person name="Holmes A."/>
            <person name="Grewal N."/>
            <person name="Mulvaney E."/>
            <person name="Ryan E."/>
            <person name="Sun H."/>
            <person name="Florea L."/>
            <person name="Miller W."/>
            <person name="Stoneking T."/>
            <person name="Nhan M."/>
            <person name="Waterston R."/>
            <person name="Wilson R.K."/>
        </authorList>
    </citation>
    <scope>NUCLEOTIDE SEQUENCE [LARGE SCALE GENOMIC DNA]</scope>
    <source>
        <strain>LT2 / SGSC1412 / ATCC 700720</strain>
    </source>
</reference>
<name>ATPE_SALTY</name>
<comment type="function">
    <text evidence="2">Produces ATP from ADP in the presence of a proton gradient across the membrane.</text>
</comment>
<comment type="subunit">
    <text>F-type ATPases have 2 components, CF(1) - the catalytic core - and CF(0) - the membrane proton channel. CF(1) has five subunits: alpha(3), beta(3), gamma(1), delta(1), epsilon(1). CF(0) has three main subunits: a, b and c.</text>
</comment>
<comment type="subcellular location">
    <subcellularLocation>
        <location evidence="2">Cell inner membrane</location>
        <topology evidence="2">Peripheral membrane protein</topology>
    </subcellularLocation>
</comment>
<comment type="similarity">
    <text evidence="2">Belongs to the ATPase epsilon chain family.</text>
</comment>
<comment type="sequence caution" evidence="3">
    <conflict type="erroneous initiation">
        <sequence resource="EMBL-CDS" id="AAF19363"/>
    </conflict>
</comment>
<feature type="initiator methionine" description="Removed" evidence="1">
    <location>
        <position position="1"/>
    </location>
</feature>
<feature type="chain" id="PRO_0000188197" description="ATP synthase epsilon chain">
    <location>
        <begin position="2"/>
        <end position="139"/>
    </location>
</feature>
<accession>P0A1B7</accession>
<accession>Q9RFL2</accession>
<evidence type="ECO:0000250" key="1"/>
<evidence type="ECO:0000255" key="2">
    <source>
        <dbReference type="HAMAP-Rule" id="MF_00530"/>
    </source>
</evidence>
<evidence type="ECO:0000305" key="3"/>
<keyword id="KW-0066">ATP synthesis</keyword>
<keyword id="KW-0997">Cell inner membrane</keyword>
<keyword id="KW-1003">Cell membrane</keyword>
<keyword id="KW-0139">CF(1)</keyword>
<keyword id="KW-0375">Hydrogen ion transport</keyword>
<keyword id="KW-0406">Ion transport</keyword>
<keyword id="KW-0472">Membrane</keyword>
<keyword id="KW-1185">Reference proteome</keyword>
<keyword id="KW-0813">Transport</keyword>
<sequence>MAMTYHLDVVSAEQQMFSGLVEKIQVTGSEGELGIYPGHAPLLTAIKPGMIRIVKQHGHEEFIYLSGGILEVQPGSVTVLADTAIRGQDLDEARALEAKRKAEEHIKSSHGDVDYAQASAELAKAIAKLRVIELTKKAM</sequence>
<proteinExistence type="evidence at transcript level"/>
<gene>
    <name evidence="2" type="primary">atpC</name>
    <name type="ordered locus">STM3864</name>
</gene>
<organism>
    <name type="scientific">Salmonella typhimurium (strain LT2 / SGSC1412 / ATCC 700720)</name>
    <dbReference type="NCBI Taxonomy" id="99287"/>
    <lineage>
        <taxon>Bacteria</taxon>
        <taxon>Pseudomonadati</taxon>
        <taxon>Pseudomonadota</taxon>
        <taxon>Gammaproteobacteria</taxon>
        <taxon>Enterobacterales</taxon>
        <taxon>Enterobacteriaceae</taxon>
        <taxon>Salmonella</taxon>
    </lineage>
</organism>